<gene>
    <name evidence="1" type="primary">secA</name>
    <name type="ordered locus">BR1945</name>
    <name type="ordered locus">BS1330_I1939</name>
</gene>
<accession>Q8FYD8</accession>
<accession>G0K888</accession>
<dbReference type="EC" id="7.4.2.8" evidence="1"/>
<dbReference type="EMBL" id="AE014291">
    <property type="protein sequence ID" value="AAN30837.1"/>
    <property type="molecule type" value="Genomic_DNA"/>
</dbReference>
<dbReference type="EMBL" id="CP002997">
    <property type="protein sequence ID" value="AEM19254.1"/>
    <property type="molecule type" value="Genomic_DNA"/>
</dbReference>
<dbReference type="RefSeq" id="WP_006190946.1">
    <property type="nucleotide sequence ID" value="NZ_KN046804.1"/>
</dbReference>
<dbReference type="SMR" id="Q8FYD8"/>
<dbReference type="GeneID" id="45052890"/>
<dbReference type="KEGG" id="bms:BR1945"/>
<dbReference type="KEGG" id="bsi:BS1330_I1939"/>
<dbReference type="PATRIC" id="fig|204722.21.peg.2996"/>
<dbReference type="HOGENOM" id="CLU_005314_3_0_5"/>
<dbReference type="PhylomeDB" id="Q8FYD8"/>
<dbReference type="Proteomes" id="UP000007104">
    <property type="component" value="Chromosome I"/>
</dbReference>
<dbReference type="GO" id="GO:0031522">
    <property type="term" value="C:cell envelope Sec protein transport complex"/>
    <property type="evidence" value="ECO:0007669"/>
    <property type="project" value="TreeGrafter"/>
</dbReference>
<dbReference type="GO" id="GO:0005829">
    <property type="term" value="C:cytosol"/>
    <property type="evidence" value="ECO:0007669"/>
    <property type="project" value="TreeGrafter"/>
</dbReference>
<dbReference type="GO" id="GO:0005886">
    <property type="term" value="C:plasma membrane"/>
    <property type="evidence" value="ECO:0007669"/>
    <property type="project" value="UniProtKB-SubCell"/>
</dbReference>
<dbReference type="GO" id="GO:0005524">
    <property type="term" value="F:ATP binding"/>
    <property type="evidence" value="ECO:0007669"/>
    <property type="project" value="UniProtKB-UniRule"/>
</dbReference>
<dbReference type="GO" id="GO:0046872">
    <property type="term" value="F:metal ion binding"/>
    <property type="evidence" value="ECO:0007669"/>
    <property type="project" value="UniProtKB-KW"/>
</dbReference>
<dbReference type="GO" id="GO:0008564">
    <property type="term" value="F:protein-exporting ATPase activity"/>
    <property type="evidence" value="ECO:0007669"/>
    <property type="project" value="UniProtKB-EC"/>
</dbReference>
<dbReference type="GO" id="GO:0065002">
    <property type="term" value="P:intracellular protein transmembrane transport"/>
    <property type="evidence" value="ECO:0007669"/>
    <property type="project" value="UniProtKB-UniRule"/>
</dbReference>
<dbReference type="GO" id="GO:0017038">
    <property type="term" value="P:protein import"/>
    <property type="evidence" value="ECO:0007669"/>
    <property type="project" value="InterPro"/>
</dbReference>
<dbReference type="GO" id="GO:0006605">
    <property type="term" value="P:protein targeting"/>
    <property type="evidence" value="ECO:0007669"/>
    <property type="project" value="UniProtKB-UniRule"/>
</dbReference>
<dbReference type="GO" id="GO:0043952">
    <property type="term" value="P:protein transport by the Sec complex"/>
    <property type="evidence" value="ECO:0007669"/>
    <property type="project" value="TreeGrafter"/>
</dbReference>
<dbReference type="CDD" id="cd17928">
    <property type="entry name" value="DEXDc_SecA"/>
    <property type="match status" value="1"/>
</dbReference>
<dbReference type="CDD" id="cd18803">
    <property type="entry name" value="SF2_C_secA"/>
    <property type="match status" value="1"/>
</dbReference>
<dbReference type="FunFam" id="3.90.1440.10:FF:000001">
    <property type="entry name" value="Preprotein translocase subunit SecA"/>
    <property type="match status" value="1"/>
</dbReference>
<dbReference type="FunFam" id="1.10.3060.10:FF:000003">
    <property type="entry name" value="Protein translocase subunit SecA"/>
    <property type="match status" value="1"/>
</dbReference>
<dbReference type="FunFam" id="3.40.50.300:FF:000334">
    <property type="entry name" value="Protein translocase subunit SecA"/>
    <property type="match status" value="1"/>
</dbReference>
<dbReference type="FunFam" id="3.40.50.300:FF:001790">
    <property type="entry name" value="Protein translocase subunit SecA"/>
    <property type="match status" value="1"/>
</dbReference>
<dbReference type="Gene3D" id="3.10.450.50">
    <property type="match status" value="1"/>
</dbReference>
<dbReference type="Gene3D" id="1.10.3060.10">
    <property type="entry name" value="Helical scaffold and wing domains of SecA"/>
    <property type="match status" value="1"/>
</dbReference>
<dbReference type="Gene3D" id="3.40.50.300">
    <property type="entry name" value="P-loop containing nucleotide triphosphate hydrolases"/>
    <property type="match status" value="2"/>
</dbReference>
<dbReference type="Gene3D" id="3.90.1440.10">
    <property type="entry name" value="SecA, preprotein cross-linking domain"/>
    <property type="match status" value="1"/>
</dbReference>
<dbReference type="HAMAP" id="MF_01382">
    <property type="entry name" value="SecA"/>
    <property type="match status" value="1"/>
</dbReference>
<dbReference type="InterPro" id="IPR014001">
    <property type="entry name" value="Helicase_ATP-bd"/>
</dbReference>
<dbReference type="InterPro" id="IPR001650">
    <property type="entry name" value="Helicase_C-like"/>
</dbReference>
<dbReference type="InterPro" id="IPR027417">
    <property type="entry name" value="P-loop_NTPase"/>
</dbReference>
<dbReference type="InterPro" id="IPR004027">
    <property type="entry name" value="SEC_C_motif"/>
</dbReference>
<dbReference type="InterPro" id="IPR000185">
    <property type="entry name" value="SecA"/>
</dbReference>
<dbReference type="InterPro" id="IPR020937">
    <property type="entry name" value="SecA_CS"/>
</dbReference>
<dbReference type="InterPro" id="IPR011115">
    <property type="entry name" value="SecA_DEAD"/>
</dbReference>
<dbReference type="InterPro" id="IPR014018">
    <property type="entry name" value="SecA_motor_DEAD"/>
</dbReference>
<dbReference type="InterPro" id="IPR011130">
    <property type="entry name" value="SecA_preprotein_X-link_dom"/>
</dbReference>
<dbReference type="InterPro" id="IPR044722">
    <property type="entry name" value="SecA_SF2_C"/>
</dbReference>
<dbReference type="InterPro" id="IPR011116">
    <property type="entry name" value="SecA_Wing/Scaffold"/>
</dbReference>
<dbReference type="InterPro" id="IPR036266">
    <property type="entry name" value="SecA_Wing/Scaffold_sf"/>
</dbReference>
<dbReference type="InterPro" id="IPR036670">
    <property type="entry name" value="SecA_X-link_sf"/>
</dbReference>
<dbReference type="NCBIfam" id="NF009538">
    <property type="entry name" value="PRK12904.1"/>
    <property type="match status" value="1"/>
</dbReference>
<dbReference type="NCBIfam" id="TIGR00963">
    <property type="entry name" value="secA"/>
    <property type="match status" value="1"/>
</dbReference>
<dbReference type="PANTHER" id="PTHR30612:SF0">
    <property type="entry name" value="CHLOROPLAST PROTEIN-TRANSPORTING ATPASE"/>
    <property type="match status" value="1"/>
</dbReference>
<dbReference type="PANTHER" id="PTHR30612">
    <property type="entry name" value="SECA INNER MEMBRANE COMPONENT OF SEC PROTEIN SECRETION SYSTEM"/>
    <property type="match status" value="1"/>
</dbReference>
<dbReference type="Pfam" id="PF21090">
    <property type="entry name" value="P-loop_SecA"/>
    <property type="match status" value="1"/>
</dbReference>
<dbReference type="Pfam" id="PF02810">
    <property type="entry name" value="SEC-C"/>
    <property type="match status" value="1"/>
</dbReference>
<dbReference type="Pfam" id="PF07517">
    <property type="entry name" value="SecA_DEAD"/>
    <property type="match status" value="1"/>
</dbReference>
<dbReference type="Pfam" id="PF01043">
    <property type="entry name" value="SecA_PP_bind"/>
    <property type="match status" value="1"/>
</dbReference>
<dbReference type="Pfam" id="PF07516">
    <property type="entry name" value="SecA_SW"/>
    <property type="match status" value="1"/>
</dbReference>
<dbReference type="PRINTS" id="PR00906">
    <property type="entry name" value="SECA"/>
</dbReference>
<dbReference type="SMART" id="SM00957">
    <property type="entry name" value="SecA_DEAD"/>
    <property type="match status" value="1"/>
</dbReference>
<dbReference type="SMART" id="SM00958">
    <property type="entry name" value="SecA_PP_bind"/>
    <property type="match status" value="1"/>
</dbReference>
<dbReference type="SUPFAM" id="SSF81886">
    <property type="entry name" value="Helical scaffold and wing domains of SecA"/>
    <property type="match status" value="1"/>
</dbReference>
<dbReference type="SUPFAM" id="SSF52540">
    <property type="entry name" value="P-loop containing nucleoside triphosphate hydrolases"/>
    <property type="match status" value="2"/>
</dbReference>
<dbReference type="SUPFAM" id="SSF81767">
    <property type="entry name" value="Pre-protein crosslinking domain of SecA"/>
    <property type="match status" value="1"/>
</dbReference>
<dbReference type="PROSITE" id="PS01312">
    <property type="entry name" value="SECA"/>
    <property type="match status" value="1"/>
</dbReference>
<dbReference type="PROSITE" id="PS51196">
    <property type="entry name" value="SECA_MOTOR_DEAD"/>
    <property type="match status" value="1"/>
</dbReference>
<evidence type="ECO:0000255" key="1">
    <source>
        <dbReference type="HAMAP-Rule" id="MF_01382"/>
    </source>
</evidence>
<comment type="function">
    <text evidence="1">Part of the Sec protein translocase complex. Interacts with the SecYEG preprotein conducting channel. Has a central role in coupling the hydrolysis of ATP to the transfer of proteins into and across the cell membrane, serving both as a receptor for the preprotein-SecB complex and as an ATP-driven molecular motor driving the stepwise translocation of polypeptide chains across the membrane.</text>
</comment>
<comment type="catalytic activity">
    <reaction evidence="1">
        <text>ATP + H2O + cellular proteinSide 1 = ADP + phosphate + cellular proteinSide 2.</text>
        <dbReference type="EC" id="7.4.2.8"/>
    </reaction>
</comment>
<comment type="cofactor">
    <cofactor evidence="1">
        <name>Zn(2+)</name>
        <dbReference type="ChEBI" id="CHEBI:29105"/>
    </cofactor>
    <text evidence="1">May bind 1 zinc ion per subunit.</text>
</comment>
<comment type="subunit">
    <text evidence="1">Monomer and homodimer. Part of the essential Sec protein translocation apparatus which comprises SecA, SecYEG and auxiliary proteins SecDF-YajC and YidC.</text>
</comment>
<comment type="subcellular location">
    <subcellularLocation>
        <location evidence="1">Cell inner membrane</location>
        <topology evidence="1">Peripheral membrane protein</topology>
        <orientation evidence="1">Cytoplasmic side</orientation>
    </subcellularLocation>
    <subcellularLocation>
        <location evidence="1">Cytoplasm</location>
    </subcellularLocation>
    <text evidence="1">Distribution is 50-50.</text>
</comment>
<comment type="similarity">
    <text evidence="1">Belongs to the SecA family.</text>
</comment>
<keyword id="KW-0067">ATP-binding</keyword>
<keyword id="KW-0997">Cell inner membrane</keyword>
<keyword id="KW-1003">Cell membrane</keyword>
<keyword id="KW-0963">Cytoplasm</keyword>
<keyword id="KW-0472">Membrane</keyword>
<keyword id="KW-0479">Metal-binding</keyword>
<keyword id="KW-0547">Nucleotide-binding</keyword>
<keyword id="KW-0653">Protein transport</keyword>
<keyword id="KW-1278">Translocase</keyword>
<keyword id="KW-0811">Translocation</keyword>
<keyword id="KW-0813">Transport</keyword>
<keyword id="KW-0862">Zinc</keyword>
<organism>
    <name type="scientific">Brucella suis biovar 1 (strain 1330)</name>
    <dbReference type="NCBI Taxonomy" id="204722"/>
    <lineage>
        <taxon>Bacteria</taxon>
        <taxon>Pseudomonadati</taxon>
        <taxon>Pseudomonadota</taxon>
        <taxon>Alphaproteobacteria</taxon>
        <taxon>Hyphomicrobiales</taxon>
        <taxon>Brucellaceae</taxon>
        <taxon>Brucella/Ochrobactrum group</taxon>
        <taxon>Brucella</taxon>
    </lineage>
</organism>
<proteinExistence type="inferred from homology"/>
<feature type="chain" id="PRO_1000073467" description="Protein translocase subunit SecA">
    <location>
        <begin position="1"/>
        <end position="906"/>
    </location>
</feature>
<feature type="binding site" evidence="1">
    <location>
        <position position="89"/>
    </location>
    <ligand>
        <name>ATP</name>
        <dbReference type="ChEBI" id="CHEBI:30616"/>
    </ligand>
</feature>
<feature type="binding site" evidence="1">
    <location>
        <begin position="107"/>
        <end position="111"/>
    </location>
    <ligand>
        <name>ATP</name>
        <dbReference type="ChEBI" id="CHEBI:30616"/>
    </ligand>
</feature>
<feature type="binding site" evidence="1">
    <location>
        <position position="502"/>
    </location>
    <ligand>
        <name>ATP</name>
        <dbReference type="ChEBI" id="CHEBI:30616"/>
    </ligand>
</feature>
<feature type="binding site" evidence="1">
    <location>
        <position position="890"/>
    </location>
    <ligand>
        <name>Zn(2+)</name>
        <dbReference type="ChEBI" id="CHEBI:29105"/>
    </ligand>
</feature>
<feature type="binding site" evidence="1">
    <location>
        <position position="892"/>
    </location>
    <ligand>
        <name>Zn(2+)</name>
        <dbReference type="ChEBI" id="CHEBI:29105"/>
    </ligand>
</feature>
<feature type="binding site" evidence="1">
    <location>
        <position position="901"/>
    </location>
    <ligand>
        <name>Zn(2+)</name>
        <dbReference type="ChEBI" id="CHEBI:29105"/>
    </ligand>
</feature>
<feature type="binding site" evidence="1">
    <location>
        <position position="902"/>
    </location>
    <ligand>
        <name>Zn(2+)</name>
        <dbReference type="ChEBI" id="CHEBI:29105"/>
    </ligand>
</feature>
<sequence length="906" mass="102820">MVSFGGLARKIFGSSNDRRVKTLRQRAEQITALEKNYENLTDEQLQAKTAEFRAALAEGKSLDSLLPDAFATAREAAKRVLGMRPFDVQLIGGMVLHERGIAEMRTGEGKTLMATLPVYLNALEGKGVHVVTVNDYLATRDAETMGRLYNFLGLTVGVIKHGLDDDERRAAYACDITYGTNNELGFDYLRDNMKYERAQMVQRPHNYAIVDEVDSILIDEARTPLIISGPLEDRSDFYNLIDTFIPPLAEEDYEVDEKQKTAIFTEVGTEKVEKLLEAAGHLKGESLYDIENVAVVHHLNNALRAHKLFQRDKDYIVRNDEIVIIDEFTGRMMPGRRYSEGLHQALEAKEHVTIQPENQTLASITFQNYFRMYNKLSGMTGTAATEAEEFGNIYGLEVLEIPTNLPVQRIDEDDEVYRTVEEKYRAIVRDIRASHEKGQPILVGTTSIEKSEQLAERLRREGIKGFQVLNARYHEQEAYIIAQAGVPGAVTIATNMAGRGTDIQLGGNLEMRVRQELSDVPEGSEREEKIAAIKADIAQLKEKALAAGGLYVLATERHESRRIDNQLRGRSGRQGDPGRSKFFLSLQDDLMRIFGSDRMDGMLQKLGLKEDEAIVHPWINKALEKAQKKVEARNFEIRKNLLKYDDVMNDQRKVIFEQRLEMMDEEDLTETVAEMRHEVIEDMVILRIPKDAYAEKWDIAGLKQDIASKLNLDLPVEEWAKEEDIAEEEFENRIKEAADKAAAEKAERFGPQIMTYVEKSVIMQSLDNLWREHLVNLDHLRSVVGFRGYAQRDPLNEYKTEAFELFQTMLANLREVVISQLMRVEIVGEAPPEPQLPPMAGLHIDGTTGENDFDEAIWAEHQHDDRIVPPAQRDPADPRTWGKVSRNEPCPCGSGKKYKHCHGAFE</sequence>
<protein>
    <recommendedName>
        <fullName evidence="1">Protein translocase subunit SecA</fullName>
        <ecNumber evidence="1">7.4.2.8</ecNumber>
    </recommendedName>
</protein>
<name>SECA_BRUSU</name>
<reference key="1">
    <citation type="journal article" date="2002" name="Proc. Natl. Acad. Sci. U.S.A.">
        <title>The Brucella suis genome reveals fundamental similarities between animal and plant pathogens and symbionts.</title>
        <authorList>
            <person name="Paulsen I.T."/>
            <person name="Seshadri R."/>
            <person name="Nelson K.E."/>
            <person name="Eisen J.A."/>
            <person name="Heidelberg J.F."/>
            <person name="Read T.D."/>
            <person name="Dodson R.J."/>
            <person name="Umayam L.A."/>
            <person name="Brinkac L.M."/>
            <person name="Beanan M.J."/>
            <person name="Daugherty S.C."/>
            <person name="DeBoy R.T."/>
            <person name="Durkin A.S."/>
            <person name="Kolonay J.F."/>
            <person name="Madupu R."/>
            <person name="Nelson W.C."/>
            <person name="Ayodeji B."/>
            <person name="Kraul M."/>
            <person name="Shetty J."/>
            <person name="Malek J.A."/>
            <person name="Van Aken S.E."/>
            <person name="Riedmuller S."/>
            <person name="Tettelin H."/>
            <person name="Gill S.R."/>
            <person name="White O."/>
            <person name="Salzberg S.L."/>
            <person name="Hoover D.L."/>
            <person name="Lindler L.E."/>
            <person name="Halling S.M."/>
            <person name="Boyle S.M."/>
            <person name="Fraser C.M."/>
        </authorList>
    </citation>
    <scope>NUCLEOTIDE SEQUENCE [LARGE SCALE GENOMIC DNA]</scope>
    <source>
        <strain>1330</strain>
    </source>
</reference>
<reference key="2">
    <citation type="journal article" date="2011" name="J. Bacteriol.">
        <title>Revised genome sequence of Brucella suis 1330.</title>
        <authorList>
            <person name="Tae H."/>
            <person name="Shallom S."/>
            <person name="Settlage R."/>
            <person name="Preston D."/>
            <person name="Adams L.G."/>
            <person name="Garner H.R."/>
        </authorList>
    </citation>
    <scope>NUCLEOTIDE SEQUENCE [LARGE SCALE GENOMIC DNA]</scope>
    <source>
        <strain>1330</strain>
    </source>
</reference>